<sequence>MKSSGPVERLLRALGRRDSSRAASRPRKAEPHSFREKVFRKKPPVCAVCKVTIDGTGVSCRVCKVATHRKCEAKVTSACQALPPVELRRNTAPVRRIEHLGSTKSLNHSKQRSTLPRSFSLDPLMERRWDLDLTYVTERILAAAFPARPDEQRHRGHLRELAHVLQSKHRDKYLLFNLSEKRHDLTRLNPKVQDFGWPELHAPPLDKLCSICKAMETWLSADPQHVVVLYCKGNKGKLGVIVSAYMHYSKISAGADQALATLTMRKFCEDKVATELQPSQRRYISYFSGLLSGSIRMNSSPLFLHYVLIPMLPAFEPGTGFQPFLKIYQSMQLVYTSGVYHIAGPGPQQLCISLEPALLLKGDVMVTCYHKGGRGTDRTLVFRVQFHTCTIHGPQLTFPKDQLDEAWTDERFPFQASVEFVFSSSPEKIKGSTPRNDPSVSVDYNTTEPAVRWDSYENFNQHHEDSVDGSLTHTRGPLDGSPYAQVQRPPRQTPPAPSPEPPPPPMLSVSSDSGHSSTLTTEPAAESPGRPPPTAAERQELDRLLGGCGVASGGRGAGRETAILDDEEQPTVGGGPHLGVYPGHRPGLSRHCSCRQGYREPCGVPNGGYYRPEGTLERRRLAYGGYEGSPQGYAEASMEKRRLCRSLSEGLYPYPPEMGKPATGDFGYRAPGYREVVILEDPGLPALYPCPACEEKLALPTAALYGLRLEREAGEGWASEAGKPLLHPVRPGHPLPLLLPACGHHHAPMPDYSCLKPPKAGEEGHEGCSYTMCPEGRYGHPGYPALVTYSYGGAVPSYCPAYGRVPHSCGSPGEGRGYPSPGAHSPRAGSISPGSPPYPQSRKLSYEIPTEEGGDRYPLPGHLASAGPLASAESLEPVSWREGPSGHSTLPRSPRDAPCSASSELSGPSTPLHTSSPVQGKESTRRQDTRSPTSAPTQRLSPGEALPPVSQAGTGKAPELPSGSGPEPLAPSPVSPTFPPSSPSDWPQERSPGGHSDGASPRSPVPTTLPGLRHAPWQGPRGPPDSPDGSPLTPVPSQMPWLVASPEPPQSSPTPAFPLAASYDTNGLSQPPLPEKRHLPGPGQQPGPWGPEQASSPARGISHHVTFAPLLSDNVPQTPEPPTQESQSNVKFVQDTSKFWYKPHLSRDQAIALLKDKDPGAFLIRDSHSFQGAYGLALKVATPPPSAQPWKGDPVEQLVRHFLIETGPKGVKIKGCPSEPYFGSLSALVSQHSISPISLPCCLRIPSKDPLEETPEAPVPTNMSTAADLLRQGAACSVLYLTSVETESLTGPQAVARASSAALSCSPRPTPAVVHFKVSAQGITLTDNQRKLFFRRHYPVNSITFSSTDPQDRRWTNPDGTTSKIFGFVAKKPGSPWENVCHLFAELDPDQPAGAIVTFITKVLLGQRK</sequence>
<accession>Q63HR2</accession>
<accession>A2VDF2</accession>
<accession>A2VDF3</accession>
<accession>A2VDI8</accession>
<accession>A5PKY4</accession>
<accession>Q2NL80</accession>
<accession>Q76MW6</accession>
<accession>Q7Z5T9</accession>
<accession>Q8NFF9</accession>
<accession>Q8NFG0</accession>
<accession>Q96P25</accession>
<accession>Q9NT29</accession>
<accession>Q9UPS7</accession>
<gene>
    <name type="primary">TNS2</name>
    <name type="synonym">KIAA1075</name>
    <name type="synonym">TENC1</name>
</gene>
<dbReference type="EC" id="3.1.3.48" evidence="13 16 17"/>
<dbReference type="EMBL" id="AF518729">
    <property type="protein sequence ID" value="AAM74225.1"/>
    <property type="molecule type" value="mRNA"/>
</dbReference>
<dbReference type="EMBL" id="AF518728">
    <property type="protein sequence ID" value="AAN03866.1"/>
    <property type="molecule type" value="mRNA"/>
</dbReference>
<dbReference type="EMBL" id="AF417490">
    <property type="protein sequence ID" value="AAL14641.1"/>
    <property type="molecule type" value="mRNA"/>
</dbReference>
<dbReference type="EMBL" id="AB028998">
    <property type="protein sequence ID" value="BAA83027.2"/>
    <property type="status" value="ALT_INIT"/>
    <property type="molecule type" value="mRNA"/>
</dbReference>
<dbReference type="EMBL" id="AL137564">
    <property type="protein sequence ID" value="CAB70815.1"/>
    <property type="molecule type" value="mRNA"/>
</dbReference>
<dbReference type="EMBL" id="BX647126">
    <property type="protein sequence ID" value="CAH56176.1"/>
    <property type="status" value="ALT_SEQ"/>
    <property type="molecule type" value="mRNA"/>
</dbReference>
<dbReference type="EMBL" id="BC054099">
    <property type="protein sequence ID" value="AAH54099.1"/>
    <property type="molecule type" value="mRNA"/>
</dbReference>
<dbReference type="EMBL" id="BC110854">
    <property type="protein sequence ID" value="AAI10855.1"/>
    <property type="molecule type" value="mRNA"/>
</dbReference>
<dbReference type="EMBL" id="BC129828">
    <property type="protein sequence ID" value="AAI29829.1"/>
    <property type="status" value="ALT_INIT"/>
    <property type="molecule type" value="mRNA"/>
</dbReference>
<dbReference type="EMBL" id="BC129829">
    <property type="protein sequence ID" value="AAI29830.1"/>
    <property type="status" value="ALT_INIT"/>
    <property type="molecule type" value="mRNA"/>
</dbReference>
<dbReference type="EMBL" id="BC131503">
    <property type="protein sequence ID" value="AAI31504.1"/>
    <property type="status" value="ALT_INIT"/>
    <property type="molecule type" value="mRNA"/>
</dbReference>
<dbReference type="EMBL" id="BC142668">
    <property type="protein sequence ID" value="AAI42669.1"/>
    <property type="molecule type" value="mRNA"/>
</dbReference>
<dbReference type="EMBL" id="BC142712">
    <property type="protein sequence ID" value="AAI42713.1"/>
    <property type="molecule type" value="mRNA"/>
</dbReference>
<dbReference type="CCDS" id="CCDS8843.1">
    <molecule id="Q63HR2-1"/>
</dbReference>
<dbReference type="CCDS" id="CCDS8844.1">
    <molecule id="Q63HR2-5"/>
</dbReference>
<dbReference type="PIR" id="T46500">
    <property type="entry name" value="T46500"/>
</dbReference>
<dbReference type="RefSeq" id="NP_056134.2">
    <property type="nucleotide sequence ID" value="NM_015319.2"/>
</dbReference>
<dbReference type="RefSeq" id="NP_736610.2">
    <molecule id="Q63HR2-1"/>
    <property type="nucleotide sequence ID" value="NM_170754.2"/>
</dbReference>
<dbReference type="RefSeq" id="NP_938072.1">
    <molecule id="Q63HR2-5"/>
    <property type="nucleotide sequence ID" value="NM_198316.2"/>
</dbReference>
<dbReference type="PDB" id="2DKQ">
    <property type="method" value="NMR"/>
    <property type="chains" value="A=1263-1409"/>
</dbReference>
<dbReference type="PDB" id="2KNO">
    <property type="method" value="NMR"/>
    <property type="chains" value="A=1135-1249"/>
</dbReference>
<dbReference type="PDB" id="2L6K">
    <property type="method" value="NMR"/>
    <property type="chains" value="A=1135-1248"/>
</dbReference>
<dbReference type="PDB" id="2LOZ">
    <property type="method" value="NMR"/>
    <property type="chains" value="A=1263-1409"/>
</dbReference>
<dbReference type="PDB" id="3HQC">
    <property type="method" value="X-ray"/>
    <property type="resolution" value="1.80 A"/>
    <property type="chains" value="A=1264-1409"/>
</dbReference>
<dbReference type="PDBsum" id="2DKQ"/>
<dbReference type="PDBsum" id="2KNO"/>
<dbReference type="PDBsum" id="2L6K"/>
<dbReference type="PDBsum" id="2LOZ"/>
<dbReference type="PDBsum" id="3HQC"/>
<dbReference type="BMRB" id="Q63HR2"/>
<dbReference type="SMR" id="Q63HR2"/>
<dbReference type="BioGRID" id="116951">
    <property type="interactions" value="235"/>
</dbReference>
<dbReference type="FunCoup" id="Q63HR2">
    <property type="interactions" value="117"/>
</dbReference>
<dbReference type="IntAct" id="Q63HR2">
    <property type="interactions" value="200"/>
</dbReference>
<dbReference type="MINT" id="Q63HR2"/>
<dbReference type="STRING" id="9606.ENSP00000319756"/>
<dbReference type="MoonDB" id="Q63HR2">
    <property type="type" value="Predicted"/>
</dbReference>
<dbReference type="DEPOD" id="TNS2"/>
<dbReference type="GlyConnect" id="2083">
    <property type="glycosylation" value="1 N-Linked glycan (1 site)"/>
</dbReference>
<dbReference type="GlyCosmos" id="Q63HR2">
    <property type="glycosylation" value="3 sites, 3 glycans"/>
</dbReference>
<dbReference type="GlyGen" id="Q63HR2">
    <property type="glycosylation" value="8 sites, 2 N-linked glycans (1 site), 1 O-linked glycan (4 sites)"/>
</dbReference>
<dbReference type="iPTMnet" id="Q63HR2"/>
<dbReference type="PhosphoSitePlus" id="Q63HR2"/>
<dbReference type="BioMuta" id="TNS2"/>
<dbReference type="DMDM" id="150416153"/>
<dbReference type="jPOST" id="Q63HR2"/>
<dbReference type="MassIVE" id="Q63HR2"/>
<dbReference type="PaxDb" id="9606-ENSP00000319756"/>
<dbReference type="PeptideAtlas" id="Q63HR2"/>
<dbReference type="ProteomicsDB" id="65895">
    <molecule id="Q63HR2-1"/>
</dbReference>
<dbReference type="ProteomicsDB" id="65896">
    <molecule id="Q63HR2-2"/>
</dbReference>
<dbReference type="ProteomicsDB" id="65897">
    <molecule id="Q63HR2-4"/>
</dbReference>
<dbReference type="ProteomicsDB" id="65898">
    <molecule id="Q63HR2-5"/>
</dbReference>
<dbReference type="ProteomicsDB" id="65899">
    <molecule id="Q63HR2-6"/>
</dbReference>
<dbReference type="Pumba" id="Q63HR2"/>
<dbReference type="Antibodypedia" id="26823">
    <property type="antibodies" value="84 antibodies from 23 providers"/>
</dbReference>
<dbReference type="DNASU" id="23371"/>
<dbReference type="Ensembl" id="ENST00000314250.11">
    <molecule id="Q63HR2-1"/>
    <property type="protein sequence ID" value="ENSP00000319684.7"/>
    <property type="gene ID" value="ENSG00000111077.18"/>
</dbReference>
<dbReference type="Ensembl" id="ENST00000314276.7">
    <molecule id="Q63HR2-4"/>
    <property type="protein sequence ID" value="ENSP00000319756.3"/>
    <property type="gene ID" value="ENSG00000111077.18"/>
</dbReference>
<dbReference type="Ensembl" id="ENST00000379902.7">
    <molecule id="Q63HR2-5"/>
    <property type="protein sequence ID" value="ENSP00000369232.3"/>
    <property type="gene ID" value="ENSG00000111077.18"/>
</dbReference>
<dbReference type="Ensembl" id="ENST00000546602.5">
    <molecule id="Q63HR2-2"/>
    <property type="protein sequence ID" value="ENSP00000449363.1"/>
    <property type="gene ID" value="ENSG00000111077.18"/>
</dbReference>
<dbReference type="Ensembl" id="ENST00000552570.5">
    <molecule id="Q63HR2-6"/>
    <property type="protein sequence ID" value="ENSP00000447021.1"/>
    <property type="gene ID" value="ENSG00000111077.18"/>
</dbReference>
<dbReference type="GeneID" id="23371"/>
<dbReference type="KEGG" id="hsa:23371"/>
<dbReference type="MANE-Select" id="ENST00000314250.11">
    <property type="protein sequence ID" value="ENSP00000319684.7"/>
    <property type="RefSeq nucleotide sequence ID" value="NM_170754.4"/>
    <property type="RefSeq protein sequence ID" value="NP_736610.2"/>
</dbReference>
<dbReference type="UCSC" id="uc001sbl.4">
    <molecule id="Q63HR2-1"/>
    <property type="organism name" value="human"/>
</dbReference>
<dbReference type="AGR" id="HGNC:19737"/>
<dbReference type="CTD" id="23371"/>
<dbReference type="DisGeNET" id="23371"/>
<dbReference type="GeneCards" id="TNS2"/>
<dbReference type="HGNC" id="HGNC:19737">
    <property type="gene designation" value="TNS2"/>
</dbReference>
<dbReference type="HPA" id="ENSG00000111077">
    <property type="expression patterns" value="Low tissue specificity"/>
</dbReference>
<dbReference type="MalaCards" id="TNS2"/>
<dbReference type="MIM" id="607717">
    <property type="type" value="gene"/>
</dbReference>
<dbReference type="neXtProt" id="NX_Q63HR2"/>
<dbReference type="OpenTargets" id="ENSG00000111077"/>
<dbReference type="PharmGKB" id="PA134976096"/>
<dbReference type="VEuPathDB" id="HostDB:ENSG00000111077"/>
<dbReference type="eggNOG" id="KOG1930">
    <property type="taxonomic scope" value="Eukaryota"/>
</dbReference>
<dbReference type="eggNOG" id="KOG2283">
    <property type="taxonomic scope" value="Eukaryota"/>
</dbReference>
<dbReference type="GeneTree" id="ENSGT00940000161535"/>
<dbReference type="HOGENOM" id="CLU_002189_0_0_1"/>
<dbReference type="InParanoid" id="Q63HR2"/>
<dbReference type="OMA" id="IVQREEM"/>
<dbReference type="OrthoDB" id="6273691at2759"/>
<dbReference type="PAN-GO" id="Q63HR2">
    <property type="GO annotations" value="3 GO annotations based on evolutionary models"/>
</dbReference>
<dbReference type="PhylomeDB" id="Q63HR2"/>
<dbReference type="TreeFam" id="TF315996"/>
<dbReference type="PathwayCommons" id="Q63HR2"/>
<dbReference type="SignaLink" id="Q63HR2"/>
<dbReference type="BioGRID-ORCS" id="23371">
    <property type="hits" value="47 hits in 1158 CRISPR screens"/>
</dbReference>
<dbReference type="ChiTaRS" id="TNS2">
    <property type="organism name" value="human"/>
</dbReference>
<dbReference type="EvolutionaryTrace" id="Q63HR2"/>
<dbReference type="GeneWiki" id="TENC1"/>
<dbReference type="GenomeRNAi" id="23371"/>
<dbReference type="Pharos" id="Q63HR2">
    <property type="development level" value="Tbio"/>
</dbReference>
<dbReference type="PRO" id="PR:Q63HR2"/>
<dbReference type="Proteomes" id="UP000005640">
    <property type="component" value="Chromosome 12"/>
</dbReference>
<dbReference type="RNAct" id="Q63HR2">
    <property type="molecule type" value="protein"/>
</dbReference>
<dbReference type="Bgee" id="ENSG00000111077">
    <property type="expression patterns" value="Expressed in apex of heart and 188 other cell types or tissues"/>
</dbReference>
<dbReference type="ExpressionAtlas" id="Q63HR2">
    <property type="expression patterns" value="baseline and differential"/>
</dbReference>
<dbReference type="GO" id="GO:0005737">
    <property type="term" value="C:cytoplasm"/>
    <property type="evidence" value="ECO:0007669"/>
    <property type="project" value="UniProtKB-SubCell"/>
</dbReference>
<dbReference type="GO" id="GO:0005925">
    <property type="term" value="C:focal adhesion"/>
    <property type="evidence" value="ECO:0000314"/>
    <property type="project" value="UniProtKB"/>
</dbReference>
<dbReference type="GO" id="GO:0005886">
    <property type="term" value="C:plasma membrane"/>
    <property type="evidence" value="ECO:0007669"/>
    <property type="project" value="UniProtKB-SubCell"/>
</dbReference>
<dbReference type="GO" id="GO:0042802">
    <property type="term" value="F:identical protein binding"/>
    <property type="evidence" value="ECO:0000353"/>
    <property type="project" value="IntAct"/>
</dbReference>
<dbReference type="GO" id="GO:0019900">
    <property type="term" value="F:kinase binding"/>
    <property type="evidence" value="ECO:0000353"/>
    <property type="project" value="UniProtKB"/>
</dbReference>
<dbReference type="GO" id="GO:0008289">
    <property type="term" value="F:lipid binding"/>
    <property type="evidence" value="ECO:0007669"/>
    <property type="project" value="UniProtKB-KW"/>
</dbReference>
<dbReference type="GO" id="GO:0004725">
    <property type="term" value="F:protein tyrosine phosphatase activity"/>
    <property type="evidence" value="ECO:0000314"/>
    <property type="project" value="UniProtKB"/>
</dbReference>
<dbReference type="GO" id="GO:0008270">
    <property type="term" value="F:zinc ion binding"/>
    <property type="evidence" value="ECO:0007669"/>
    <property type="project" value="UniProtKB-KW"/>
</dbReference>
<dbReference type="GO" id="GO:0019725">
    <property type="term" value="P:cellular homeostasis"/>
    <property type="evidence" value="ECO:0007669"/>
    <property type="project" value="Ensembl"/>
</dbReference>
<dbReference type="GO" id="GO:0032963">
    <property type="term" value="P:collagen metabolic process"/>
    <property type="evidence" value="ECO:0007669"/>
    <property type="project" value="Ensembl"/>
</dbReference>
<dbReference type="GO" id="GO:0001822">
    <property type="term" value="P:kidney development"/>
    <property type="evidence" value="ECO:0007669"/>
    <property type="project" value="Ensembl"/>
</dbReference>
<dbReference type="GO" id="GO:0035264">
    <property type="term" value="P:multicellular organism growth"/>
    <property type="evidence" value="ECO:0007669"/>
    <property type="project" value="Ensembl"/>
</dbReference>
<dbReference type="GO" id="GO:0048871">
    <property type="term" value="P:multicellular organismal-level homeostasis"/>
    <property type="evidence" value="ECO:0007669"/>
    <property type="project" value="Ensembl"/>
</dbReference>
<dbReference type="GO" id="GO:0008285">
    <property type="term" value="P:negative regulation of cell population proliferation"/>
    <property type="evidence" value="ECO:0000315"/>
    <property type="project" value="UniProtKB"/>
</dbReference>
<dbReference type="GO" id="GO:0046627">
    <property type="term" value="P:negative regulation of insulin receptor signaling pathway"/>
    <property type="evidence" value="ECO:0000314"/>
    <property type="project" value="UniProtKB"/>
</dbReference>
<dbReference type="GO" id="GO:0035335">
    <property type="term" value="P:peptidyl-tyrosine dephosphorylation"/>
    <property type="evidence" value="ECO:0000314"/>
    <property type="project" value="UniProtKB"/>
</dbReference>
<dbReference type="GO" id="GO:0014850">
    <property type="term" value="P:response to muscle activity"/>
    <property type="evidence" value="ECO:0007669"/>
    <property type="project" value="Ensembl"/>
</dbReference>
<dbReference type="CDD" id="cd20887">
    <property type="entry name" value="C1_TNS2"/>
    <property type="match status" value="1"/>
</dbReference>
<dbReference type="CDD" id="cd01213">
    <property type="entry name" value="PTB_tensin"/>
    <property type="match status" value="1"/>
</dbReference>
<dbReference type="CDD" id="cd14562">
    <property type="entry name" value="PTP_tensin-2"/>
    <property type="match status" value="1"/>
</dbReference>
<dbReference type="CDD" id="cd09927">
    <property type="entry name" value="SH2_Tensin_like"/>
    <property type="match status" value="1"/>
</dbReference>
<dbReference type="FunFam" id="2.30.29.30:FF:000039">
    <property type="entry name" value="Tensin 1"/>
    <property type="match status" value="1"/>
</dbReference>
<dbReference type="FunFam" id="3.30.505.10:FF:000002">
    <property type="entry name" value="Tensin 1"/>
    <property type="match status" value="1"/>
</dbReference>
<dbReference type="FunFam" id="3.30.60.20:FF:000059">
    <property type="entry name" value="Tensin 2"/>
    <property type="match status" value="1"/>
</dbReference>
<dbReference type="FunFam" id="2.60.40.1110:FF:000002">
    <property type="entry name" value="tensin-1 isoform X2"/>
    <property type="match status" value="1"/>
</dbReference>
<dbReference type="FunFam" id="3.90.190.10:FF:000010">
    <property type="entry name" value="tensin-1 isoform X2"/>
    <property type="match status" value="1"/>
</dbReference>
<dbReference type="Gene3D" id="2.60.40.1110">
    <property type="match status" value="1"/>
</dbReference>
<dbReference type="Gene3D" id="3.30.60.20">
    <property type="match status" value="1"/>
</dbReference>
<dbReference type="Gene3D" id="2.30.29.30">
    <property type="entry name" value="Pleckstrin-homology domain (PH domain)/Phosphotyrosine-binding domain (PTB)"/>
    <property type="match status" value="1"/>
</dbReference>
<dbReference type="Gene3D" id="3.90.190.10">
    <property type="entry name" value="Protein tyrosine phosphatase superfamily"/>
    <property type="match status" value="1"/>
</dbReference>
<dbReference type="Gene3D" id="3.30.505.10">
    <property type="entry name" value="SH2 domain"/>
    <property type="match status" value="1"/>
</dbReference>
<dbReference type="IDEAL" id="IID00673"/>
<dbReference type="InterPro" id="IPR046349">
    <property type="entry name" value="C1-like_sf"/>
</dbReference>
<dbReference type="InterPro" id="IPR035892">
    <property type="entry name" value="C2_domain_sf"/>
</dbReference>
<dbReference type="InterPro" id="IPR002219">
    <property type="entry name" value="PE/DAG-bd"/>
</dbReference>
<dbReference type="InterPro" id="IPR011993">
    <property type="entry name" value="PH-like_dom_sf"/>
</dbReference>
<dbReference type="InterPro" id="IPR029021">
    <property type="entry name" value="Prot-tyrosine_phosphatase-like"/>
</dbReference>
<dbReference type="InterPro" id="IPR013625">
    <property type="entry name" value="PTB"/>
</dbReference>
<dbReference type="InterPro" id="IPR006020">
    <property type="entry name" value="PTB/PI_dom"/>
</dbReference>
<dbReference type="InterPro" id="IPR000980">
    <property type="entry name" value="SH2"/>
</dbReference>
<dbReference type="InterPro" id="IPR036860">
    <property type="entry name" value="SH2_dom_sf"/>
</dbReference>
<dbReference type="InterPro" id="IPR035012">
    <property type="entry name" value="Tensin-like_SH2"/>
</dbReference>
<dbReference type="InterPro" id="IPR014020">
    <property type="entry name" value="Tensin_C2-dom"/>
</dbReference>
<dbReference type="InterPro" id="IPR029023">
    <property type="entry name" value="Tensin_phosphatase"/>
</dbReference>
<dbReference type="InterPro" id="IPR033929">
    <property type="entry name" value="Tensin_PTB"/>
</dbReference>
<dbReference type="InterPro" id="IPR051484">
    <property type="entry name" value="Tensin_PTEN_phosphatase"/>
</dbReference>
<dbReference type="PANTHER" id="PTHR45734">
    <property type="entry name" value="TENSIN"/>
    <property type="match status" value="1"/>
</dbReference>
<dbReference type="PANTHER" id="PTHR45734:SF1">
    <property type="entry name" value="TENSIN-2"/>
    <property type="match status" value="1"/>
</dbReference>
<dbReference type="Pfam" id="PF00130">
    <property type="entry name" value="C1_1"/>
    <property type="match status" value="1"/>
</dbReference>
<dbReference type="Pfam" id="PF08416">
    <property type="entry name" value="PTB"/>
    <property type="match status" value="1"/>
</dbReference>
<dbReference type="Pfam" id="PF10409">
    <property type="entry name" value="PTEN_C2"/>
    <property type="match status" value="1"/>
</dbReference>
<dbReference type="Pfam" id="PF00017">
    <property type="entry name" value="SH2"/>
    <property type="match status" value="1"/>
</dbReference>
<dbReference type="SMART" id="SM00109">
    <property type="entry name" value="C1"/>
    <property type="match status" value="1"/>
</dbReference>
<dbReference type="SMART" id="SM00462">
    <property type="entry name" value="PTB"/>
    <property type="match status" value="1"/>
</dbReference>
<dbReference type="SMART" id="SM01326">
    <property type="entry name" value="PTEN_C2"/>
    <property type="match status" value="1"/>
</dbReference>
<dbReference type="SMART" id="SM00252">
    <property type="entry name" value="SH2"/>
    <property type="match status" value="1"/>
</dbReference>
<dbReference type="SUPFAM" id="SSF52799">
    <property type="entry name" value="(Phosphotyrosine protein) phosphatases II"/>
    <property type="match status" value="1"/>
</dbReference>
<dbReference type="SUPFAM" id="SSF49562">
    <property type="entry name" value="C2 domain (Calcium/lipid-binding domain, CaLB)"/>
    <property type="match status" value="1"/>
</dbReference>
<dbReference type="SUPFAM" id="SSF57889">
    <property type="entry name" value="Cysteine-rich domain"/>
    <property type="match status" value="1"/>
</dbReference>
<dbReference type="SUPFAM" id="SSF50729">
    <property type="entry name" value="PH domain-like"/>
    <property type="match status" value="1"/>
</dbReference>
<dbReference type="SUPFAM" id="SSF55550">
    <property type="entry name" value="SH2 domain"/>
    <property type="match status" value="1"/>
</dbReference>
<dbReference type="PROSITE" id="PS51182">
    <property type="entry name" value="C2_TENSIN"/>
    <property type="match status" value="1"/>
</dbReference>
<dbReference type="PROSITE" id="PS51181">
    <property type="entry name" value="PPASE_TENSIN"/>
    <property type="match status" value="1"/>
</dbReference>
<dbReference type="PROSITE" id="PS50001">
    <property type="entry name" value="SH2"/>
    <property type="match status" value="1"/>
</dbReference>
<dbReference type="PROSITE" id="PS00479">
    <property type="entry name" value="ZF_DAG_PE_1"/>
    <property type="match status" value="1"/>
</dbReference>
<dbReference type="PROSITE" id="PS50081">
    <property type="entry name" value="ZF_DAG_PE_2"/>
    <property type="match status" value="1"/>
</dbReference>
<evidence type="ECO:0000250" key="1">
    <source>
        <dbReference type="UniProtKB" id="Q8CGB6"/>
    </source>
</evidence>
<evidence type="ECO:0000255" key="2"/>
<evidence type="ECO:0000255" key="3">
    <source>
        <dbReference type="PROSITE-ProRule" id="PRU00191"/>
    </source>
</evidence>
<evidence type="ECO:0000255" key="4">
    <source>
        <dbReference type="PROSITE-ProRule" id="PRU00226"/>
    </source>
</evidence>
<evidence type="ECO:0000255" key="5">
    <source>
        <dbReference type="PROSITE-ProRule" id="PRU00589"/>
    </source>
</evidence>
<evidence type="ECO:0000255" key="6">
    <source>
        <dbReference type="PROSITE-ProRule" id="PRU00590"/>
    </source>
</evidence>
<evidence type="ECO:0000256" key="7">
    <source>
        <dbReference type="SAM" id="MobiDB-lite"/>
    </source>
</evidence>
<evidence type="ECO:0000269" key="8">
    <source>
    </source>
</evidence>
<evidence type="ECO:0000269" key="9">
    <source>
    </source>
</evidence>
<evidence type="ECO:0000269" key="10">
    <source>
    </source>
</evidence>
<evidence type="ECO:0000269" key="11">
    <source>
    </source>
</evidence>
<evidence type="ECO:0000269" key="12">
    <source>
    </source>
</evidence>
<evidence type="ECO:0000269" key="13">
    <source>
    </source>
</evidence>
<evidence type="ECO:0000269" key="14">
    <source>
    </source>
</evidence>
<evidence type="ECO:0000269" key="15">
    <source>
    </source>
</evidence>
<evidence type="ECO:0000269" key="16">
    <source>
    </source>
</evidence>
<evidence type="ECO:0000269" key="17">
    <source>
    </source>
</evidence>
<evidence type="ECO:0000303" key="18">
    <source>
    </source>
</evidence>
<evidence type="ECO:0000303" key="19">
    <source>
    </source>
</evidence>
<evidence type="ECO:0000303" key="20">
    <source>
    </source>
</evidence>
<evidence type="ECO:0000303" key="21">
    <source>
    </source>
</evidence>
<evidence type="ECO:0000305" key="22"/>
<evidence type="ECO:0000305" key="23">
    <source>
    </source>
</evidence>
<evidence type="ECO:0007744" key="24">
    <source>
    </source>
</evidence>
<evidence type="ECO:0007744" key="25">
    <source>
    </source>
</evidence>
<evidence type="ECO:0007829" key="26">
    <source>
        <dbReference type="PDB" id="2DKQ"/>
    </source>
</evidence>
<evidence type="ECO:0007829" key="27">
    <source>
        <dbReference type="PDB" id="2KNO"/>
    </source>
</evidence>
<evidence type="ECO:0007829" key="28">
    <source>
        <dbReference type="PDB" id="2L6K"/>
    </source>
</evidence>
<evidence type="ECO:0007829" key="29">
    <source>
        <dbReference type="PDB" id="2LOZ"/>
    </source>
</evidence>
<evidence type="ECO:0007829" key="30">
    <source>
        <dbReference type="PDB" id="3HQC"/>
    </source>
</evidence>
<feature type="chain" id="PRO_0000292987" description="Tensin-2">
    <location>
        <begin position="1"/>
        <end position="1409"/>
    </location>
</feature>
<feature type="domain" description="Phosphatase tensin-type" evidence="6">
    <location>
        <begin position="122"/>
        <end position="294"/>
    </location>
</feature>
<feature type="domain" description="C2 tensin-type" evidence="5">
    <location>
        <begin position="299"/>
        <end position="425"/>
    </location>
</feature>
<feature type="domain" description="SH2" evidence="3">
    <location>
        <begin position="1140"/>
        <end position="1247"/>
    </location>
</feature>
<feature type="domain" description="PTB" evidence="2">
    <location>
        <begin position="1275"/>
        <end position="1408"/>
    </location>
</feature>
<feature type="zinc finger region" description="Phorbol-ester/DAG-type" evidence="4">
    <location>
        <begin position="31"/>
        <end position="79"/>
    </location>
</feature>
<feature type="region of interest" description="Disordered" evidence="7">
    <location>
        <begin position="1"/>
        <end position="35"/>
    </location>
</feature>
<feature type="region of interest" description="Disordered" evidence="7">
    <location>
        <begin position="462"/>
        <end position="536"/>
    </location>
</feature>
<feature type="region of interest" description="Disordered" evidence="7">
    <location>
        <begin position="562"/>
        <end position="582"/>
    </location>
</feature>
<feature type="region of interest" description="Disordered" evidence="7">
    <location>
        <begin position="812"/>
        <end position="1098"/>
    </location>
</feature>
<feature type="region of interest" description="Disordered" evidence="7">
    <location>
        <begin position="1111"/>
        <end position="1130"/>
    </location>
</feature>
<feature type="compositionally biased region" description="Basic and acidic residues" evidence="7">
    <location>
        <begin position="9"/>
        <end position="20"/>
    </location>
</feature>
<feature type="compositionally biased region" description="Pro residues" evidence="7">
    <location>
        <begin position="491"/>
        <end position="506"/>
    </location>
</feature>
<feature type="compositionally biased region" description="Polar residues" evidence="7">
    <location>
        <begin position="900"/>
        <end position="918"/>
    </location>
</feature>
<feature type="compositionally biased region" description="Polar residues" evidence="7">
    <location>
        <begin position="930"/>
        <end position="940"/>
    </location>
</feature>
<feature type="compositionally biased region" description="Pro residues" evidence="7">
    <location>
        <begin position="968"/>
        <end position="982"/>
    </location>
</feature>
<feature type="compositionally biased region" description="Pro residues" evidence="7">
    <location>
        <begin position="1046"/>
        <end position="1056"/>
    </location>
</feature>
<feature type="active site" description="Phosphocysteine intermediate" evidence="23">
    <location>
        <position position="231"/>
    </location>
</feature>
<feature type="modified residue" description="Phosphothreonine" evidence="25">
    <location>
        <position position="91"/>
    </location>
</feature>
<feature type="modified residue" description="Phosphoserine" evidence="1">
    <location>
        <position position="118"/>
    </location>
</feature>
<feature type="modified residue" description="Phosphoserine" evidence="24 25">
    <location>
        <position position="120"/>
    </location>
</feature>
<feature type="modified residue" description="Phosphoserine" evidence="25">
    <location>
        <position position="455"/>
    </location>
</feature>
<feature type="modified residue" description="Phosphotyrosine" evidence="25">
    <location>
        <position position="456"/>
    </location>
</feature>
<feature type="modified residue" description="Phosphoserine" evidence="25">
    <location>
        <position position="466"/>
    </location>
</feature>
<feature type="modified residue" description="Phosphothreonine" evidence="25">
    <location>
        <position position="474"/>
    </location>
</feature>
<feature type="modified residue" description="Phosphoserine" evidence="1">
    <location>
        <position position="481"/>
    </location>
</feature>
<feature type="modified residue" description="Phosphotyrosine" evidence="1">
    <location>
        <position position="483"/>
    </location>
</feature>
<feature type="modified residue" description="Omega-N-methylarginine" evidence="1">
    <location>
        <position position="555"/>
    </location>
</feature>
<feature type="modified residue" description="Phosphoserine" evidence="25">
    <location>
        <position position="820"/>
    </location>
</feature>
<feature type="modified residue" description="Phosphoserine" evidence="25">
    <location>
        <position position="825"/>
    </location>
</feature>
<feature type="modified residue" description="Phosphoserine" evidence="25">
    <location>
        <position position="830"/>
    </location>
</feature>
<feature type="modified residue" description="Phosphoserine" evidence="25">
    <location>
        <position position="832"/>
    </location>
</feature>
<feature type="modified residue" description="Phosphoserine" evidence="24">
    <location>
        <position position="835"/>
    </location>
</feature>
<feature type="modified residue" description="Phosphoserine" evidence="25">
    <location>
        <position position="845"/>
    </location>
</feature>
<feature type="modified residue" description="Phosphothreonine" evidence="1">
    <location>
        <position position="910"/>
    </location>
</feature>
<feature type="modified residue" description="Phosphoserine" evidence="25">
    <location>
        <position position="931"/>
    </location>
</feature>
<feature type="modified residue" description="Phosphoserine" evidence="25">
    <location>
        <position position="941"/>
    </location>
</feature>
<feature type="modified residue" description="Phosphoserine" evidence="25">
    <location>
        <position position="972"/>
    </location>
</feature>
<feature type="modified residue" description="Phosphothreonine" evidence="25">
    <location>
        <position position="977"/>
    </location>
</feature>
<feature type="modified residue" description="Phosphoserine" evidence="25">
    <location>
        <position position="991"/>
    </location>
</feature>
<feature type="modified residue" description="Phosphoserine" evidence="24 25">
    <location>
        <position position="1003"/>
    </location>
</feature>
<feature type="modified residue" description="Phosphothreonine" evidence="25">
    <location>
        <position position="1182"/>
    </location>
</feature>
<feature type="modified residue" description="Phosphoserine" evidence="25">
    <location>
        <position position="1247"/>
    </location>
</feature>
<feature type="splice variant" id="VSP_026457" description="In isoform 5." evidence="18 20">
    <location>
        <begin position="1"/>
        <end position="124"/>
    </location>
</feature>
<feature type="splice variant" id="VSP_026458" description="In isoform 4." evidence="19">
    <original>MKSSGPVERLLRALGRRDSSRAASR</original>
    <variation>MDGGGVCVGRGDLLSSPQALGQLLRKESRPRRAMK</variation>
    <location>
        <begin position="1"/>
        <end position="25"/>
    </location>
</feature>
<feature type="splice variant" id="VSP_026460" description="In isoform 2." evidence="20">
    <location>
        <begin position="776"/>
        <end position="872"/>
    </location>
</feature>
<feature type="splice variant" id="VSP_026461" description="In isoform 6." evidence="21">
    <location>
        <begin position="1273"/>
        <end position="1274"/>
    </location>
</feature>
<feature type="sequence variant" id="VAR_033043" description="In dbSNP:rs11170389.">
    <original>S</original>
    <variation>T</variation>
    <location>
        <position position="353"/>
    </location>
</feature>
<feature type="sequence variant" id="VAR_052547" description="In dbSNP:rs11558984.">
    <original>A</original>
    <variation>T</variation>
    <location>
        <position position="670"/>
    </location>
</feature>
<feature type="mutagenesis site" description="Loss of tyrosine-protein phosphatase activity. Reduced IRS1 degradation under catabolic conditions. Abolishes inhibition of AKT1 kinase activity. Does not affect disruption of SQSTM1-IRS1 interaction by TNS2. Reduced mTORC1 complex activation." evidence="10 13 14 16">
    <original>C</original>
    <variation>S</variation>
    <location>
        <position position="231"/>
    </location>
</feature>
<feature type="mutagenesis site" description="6-fold reduction in affinity for PtdIns(3,4,5)P3 and reduced IRS1 dephosphorylation but does not affect cell membrane localization or affinity for a tyrosine-phosphorylated peptide; when associated with Q-1155 and Q-1157." evidence="17">
    <original>K</original>
    <variation>Q</variation>
    <location>
        <position position="1142"/>
    </location>
</feature>
<feature type="mutagenesis site" description="6-fold reduction in affinity for PtdIns(3,4,5)P3 and reduced IRS1 dephosphorylation but does not affect cell membrane localization or affinity for a tyrosine-phosphorylated peptide; when associated with Q-1142 and Q-1157." evidence="17">
    <original>K</original>
    <variation>Q</variation>
    <location>
        <position position="1155"/>
    </location>
</feature>
<feature type="mutagenesis site" description="6-fold reduction in affinity for PtdIns(3,4,5)P3 and reduced IRS1 dephosphorylation but does not affect cell membrane localization or affinity for a tyrosine-phosphorylated peptide; when associated with Q-1142 and Q-1155." evidence="17">
    <original>K</original>
    <variation>Q</variation>
    <location>
        <position position="1157"/>
    </location>
</feature>
<feature type="mutagenesis site" description="Does not affect affinity for PtdIns(3,4,5)P3. Reduced affinity for tyrosine-phosphorylated peptide." evidence="17">
    <original>R</original>
    <variation>A</variation>
    <location>
        <position position="1165"/>
    </location>
</feature>
<feature type="mutagenesis site" description="Does not affect affinity for PtdIns(3,4,5)P3; when associated with Q-1212 and Q-1214." evidence="17">
    <original>K</original>
    <variation>Q</variation>
    <location>
        <position position="1209"/>
    </location>
</feature>
<feature type="mutagenesis site" description="Does not affect affinity for PtdIns(3,4,5)P3; when associated with Q-1209 and Q-1214." evidence="17">
    <original>K</original>
    <variation>Q</variation>
    <location>
        <position position="1212"/>
    </location>
</feature>
<feature type="mutagenesis site" description="Does not affect affinity for PtdIns(3,4,5)P3; when associated with Q-1209 and Q-1212." evidence="17">
    <original>K</original>
    <variation>Q</variation>
    <location>
        <position position="1214"/>
    </location>
</feature>
<feature type="sequence conflict" description="In Ref. 6; AAH54099." evidence="22" ref="6">
    <original>A</original>
    <variation>V</variation>
    <location>
        <position position="702"/>
    </location>
</feature>
<feature type="sequence conflict" description="In Ref. 6; AAH54099." evidence="22" ref="6">
    <original>P</original>
    <variation>Q</variation>
    <location>
        <position position="898"/>
    </location>
</feature>
<feature type="sequence conflict" description="In Ref. 5; CAB70815." evidence="22" ref="5">
    <original>P</original>
    <variation>L</variation>
    <location>
        <position position="1036"/>
    </location>
</feature>
<feature type="sequence conflict" description="In Ref. 6; AAI29830." evidence="22" ref="6">
    <original>G</original>
    <variation>E</variation>
    <location>
        <position position="1083"/>
    </location>
</feature>
<feature type="sequence conflict" description="In Ref. 6; AAH54099." evidence="22" ref="6">
    <original>P</original>
    <variation>S</variation>
    <location>
        <position position="1119"/>
    </location>
</feature>
<feature type="sequence conflict" description="In Ref. 6; AAH54099." evidence="22" ref="6">
    <original>D</original>
    <variation>G</variation>
    <location>
        <position position="1148"/>
    </location>
</feature>
<feature type="sequence conflict" description="In Ref. 5; CAH56176." evidence="22" ref="5">
    <original>P</original>
    <variation>L</variation>
    <location>
        <position position="1236"/>
    </location>
</feature>
<feature type="sequence conflict" description="In Ref. 1; AAM74225/AAN03866, 2; AAL14641 and 3; BAA83027." evidence="22" ref="1 2 3">
    <original>P</original>
    <variation>L</variation>
    <location>
        <position position="1246"/>
    </location>
</feature>
<feature type="helix" evidence="27">
    <location>
        <begin position="1137"/>
        <end position="1140"/>
    </location>
</feature>
<feature type="strand" evidence="28">
    <location>
        <begin position="1141"/>
        <end position="1144"/>
    </location>
</feature>
<feature type="helix" evidence="27">
    <location>
        <begin position="1147"/>
        <end position="1154"/>
    </location>
</feature>
<feature type="strand" evidence="27">
    <location>
        <begin position="1161"/>
        <end position="1166"/>
    </location>
</feature>
<feature type="strand" evidence="27">
    <location>
        <begin position="1168"/>
        <end position="1170"/>
    </location>
</feature>
<feature type="strand" evidence="27">
    <location>
        <begin position="1173"/>
        <end position="1179"/>
    </location>
</feature>
<feature type="strand" evidence="27">
    <location>
        <begin position="1184"/>
        <end position="1189"/>
    </location>
</feature>
<feature type="strand" evidence="28">
    <location>
        <begin position="1190"/>
        <end position="1192"/>
    </location>
</feature>
<feature type="helix" evidence="27">
    <location>
        <begin position="1194"/>
        <end position="1198"/>
    </location>
</feature>
<feature type="strand" evidence="27">
    <location>
        <begin position="1199"/>
        <end position="1205"/>
    </location>
</feature>
<feature type="strand" evidence="28">
    <location>
        <begin position="1210"/>
        <end position="1213"/>
    </location>
</feature>
<feature type="strand" evidence="28">
    <location>
        <begin position="1222"/>
        <end position="1224"/>
    </location>
</feature>
<feature type="helix" evidence="27">
    <location>
        <begin position="1225"/>
        <end position="1230"/>
    </location>
</feature>
<feature type="turn" evidence="27">
    <location>
        <begin position="1231"/>
        <end position="1234"/>
    </location>
</feature>
<feature type="strand" evidence="28">
    <location>
        <begin position="1237"/>
        <end position="1241"/>
    </location>
</feature>
<feature type="helix" evidence="30">
    <location>
        <begin position="1266"/>
        <end position="1272"/>
    </location>
</feature>
<feature type="strand" evidence="30">
    <location>
        <begin position="1274"/>
        <end position="1285"/>
    </location>
</feature>
<feature type="helix" evidence="30">
    <location>
        <begin position="1291"/>
        <end position="1304"/>
    </location>
</feature>
<feature type="strand" evidence="26">
    <location>
        <begin position="1305"/>
        <end position="1307"/>
    </location>
</feature>
<feature type="strand" evidence="30">
    <location>
        <begin position="1312"/>
        <end position="1319"/>
    </location>
</feature>
<feature type="strand" evidence="30">
    <location>
        <begin position="1322"/>
        <end position="1329"/>
    </location>
</feature>
<feature type="strand" evidence="30">
    <location>
        <begin position="1332"/>
        <end position="1339"/>
    </location>
</feature>
<feature type="helix" evidence="30">
    <location>
        <begin position="1340"/>
        <end position="1342"/>
    </location>
</feature>
<feature type="strand" evidence="30">
    <location>
        <begin position="1343"/>
        <end position="1348"/>
    </location>
</feature>
<feature type="strand" evidence="29">
    <location>
        <begin position="1350"/>
        <end position="1352"/>
    </location>
</feature>
<feature type="strand" evidence="30">
    <location>
        <begin position="1354"/>
        <end position="1356"/>
    </location>
</feature>
<feature type="turn" evidence="26">
    <location>
        <begin position="1358"/>
        <end position="1360"/>
    </location>
</feature>
<feature type="strand" evidence="30">
    <location>
        <begin position="1362"/>
        <end position="1372"/>
    </location>
</feature>
<feature type="strand" evidence="30">
    <location>
        <begin position="1375"/>
        <end position="1385"/>
    </location>
</feature>
<feature type="strand" evidence="26">
    <location>
        <begin position="1389"/>
        <end position="1391"/>
    </location>
</feature>
<feature type="helix" evidence="30">
    <location>
        <begin position="1393"/>
        <end position="1405"/>
    </location>
</feature>
<proteinExistence type="evidence at protein level"/>
<name>TENS2_HUMAN</name>
<reference key="1">
    <citation type="journal article" date="2002" name="Biochem. Biophys. Res. Commun.">
        <title>Interaction of Axl receptor tyrosine kinase with C1-TEN, a novel C1 domain-containing protein with homology to tensin.</title>
        <authorList>
            <person name="Hafizi S."/>
            <person name="Alindri F."/>
            <person name="Karlsson R."/>
            <person name="Dahlbaeck B."/>
        </authorList>
    </citation>
    <scope>NUCLEOTIDE SEQUENCE [MRNA] (ISOFORMS 1 AND 4)</scope>
    <scope>INTERACTION WITH AXL</scope>
    <scope>TISSUE SPECIFICITY</scope>
    <source>
        <tissue>Kidney</tissue>
    </source>
</reference>
<reference key="2">
    <citation type="journal article" date="2002" name="Proc. Natl. Acad. Sci. U.S.A.">
        <title>Tensin1 and a previously undocumented family member, tensin2, positively regulate cell migration.</title>
        <authorList>
            <person name="Chen H."/>
            <person name="Duncan I.C."/>
            <person name="Bozorgchami H."/>
            <person name="Lo S.H."/>
        </authorList>
    </citation>
    <scope>NUCLEOTIDE SEQUENCE [MRNA] (ISOFORM 5)</scope>
    <scope>SUBCELLULAR LOCATION</scope>
    <scope>TISSUE SPECIFICITY</scope>
</reference>
<reference key="3">
    <citation type="journal article" date="1999" name="DNA Res.">
        <title>Prediction of the coding sequences of unidentified human genes. XIV. The complete sequences of 100 new cDNA clones from brain which code for large proteins in vitro.</title>
        <authorList>
            <person name="Kikuno R."/>
            <person name="Nagase T."/>
            <person name="Ishikawa K."/>
            <person name="Hirosawa M."/>
            <person name="Miyajima N."/>
            <person name="Tanaka A."/>
            <person name="Kotani H."/>
            <person name="Nomura N."/>
            <person name="Ohara O."/>
        </authorList>
    </citation>
    <scope>NUCLEOTIDE SEQUENCE [LARGE SCALE MRNA] (ISOFORM 1)</scope>
    <source>
        <tissue>Brain</tissue>
    </source>
</reference>
<reference key="4">
    <citation type="journal article" date="2002" name="DNA Res.">
        <title>Construction of expression-ready cDNA clones for KIAA genes: manual curation of 330 KIAA cDNA clones.</title>
        <authorList>
            <person name="Nakajima D."/>
            <person name="Okazaki N."/>
            <person name="Yamakawa H."/>
            <person name="Kikuno R."/>
            <person name="Ohara O."/>
            <person name="Nagase T."/>
        </authorList>
    </citation>
    <scope>SEQUENCE REVISION</scope>
</reference>
<reference key="5">
    <citation type="journal article" date="2007" name="BMC Genomics">
        <title>The full-ORF clone resource of the German cDNA consortium.</title>
        <authorList>
            <person name="Bechtel S."/>
            <person name="Rosenfelder H."/>
            <person name="Duda A."/>
            <person name="Schmidt C.P."/>
            <person name="Ernst U."/>
            <person name="Wellenreuther R."/>
            <person name="Mehrle A."/>
            <person name="Schuster C."/>
            <person name="Bahr A."/>
            <person name="Bloecker H."/>
            <person name="Heubner D."/>
            <person name="Hoerlein A."/>
            <person name="Michel G."/>
            <person name="Wedler H."/>
            <person name="Koehrer K."/>
            <person name="Ottenwaelder B."/>
            <person name="Poustka A."/>
            <person name="Wiemann S."/>
            <person name="Schupp I."/>
        </authorList>
    </citation>
    <scope>NUCLEOTIDE SEQUENCE [LARGE SCALE MRNA] (ISOFORM 1)</scope>
    <scope>NUCLEOTIDE SEQUENCE [LARGE SCALE MRNA] OF 759-1409 (ISOFORM 6)</scope>
    <source>
        <tissue>Colon endothelium</tissue>
        <tissue>Testis</tissue>
    </source>
</reference>
<reference key="6">
    <citation type="journal article" date="2004" name="Genome Res.">
        <title>The status, quality, and expansion of the NIH full-length cDNA project: the Mammalian Gene Collection (MGC).</title>
        <authorList>
            <consortium name="The MGC Project Team"/>
        </authorList>
    </citation>
    <scope>NUCLEOTIDE SEQUENCE [LARGE SCALE MRNA] (ISOFORMS 1 AND 5)</scope>
    <scope>NUCLEOTIDE SEQUENCE [LARGE SCALE MRNA] OF 364-1398 (ISOFORM 2)</scope>
    <source>
        <tissue>Brain</tissue>
        <tissue>Uterus</tissue>
    </source>
</reference>
<reference key="7">
    <citation type="journal article" date="2005" name="FASEB J.">
        <title>C1-TEN is a negative regulator of the Akt/PKB signal transduction pathway and inhibits cell survival, proliferation, and migration.</title>
        <authorList>
            <person name="Hafizi S."/>
            <person name="Ibraimi F."/>
            <person name="Dahlbaeck B."/>
        </authorList>
    </citation>
    <scope>FUNCTION</scope>
    <scope>MUTAGENESIS OF CYS-231</scope>
</reference>
<reference key="8">
    <citation type="journal article" date="2010" name="J. Cell. Biochem.">
        <title>Tensin 2 modulates cell contractility in 3D collagen gels through the RhoGAP DLC1.</title>
        <authorList>
            <person name="Clark K."/>
            <person name="Howe J.D."/>
            <person name="Pullar C.E."/>
            <person name="Green J.A."/>
            <person name="Artym V.V."/>
            <person name="Yamada K.M."/>
            <person name="Critchley D.R."/>
        </authorList>
    </citation>
    <scope>FUNCTION</scope>
    <scope>SUBCELLULAR LOCATION</scope>
</reference>
<reference key="9">
    <citation type="journal article" date="2012" name="Biochim. Biophys. Acta">
        <title>The protein-tyrosine kinase Syk interacts with the C-terminal region of tensin2.</title>
        <authorList>
            <person name="Moon K.D."/>
            <person name="Zhang X."/>
            <person name="Zhou Q."/>
            <person name="Geahlen R.L."/>
        </authorList>
    </citation>
    <scope>INTERACTION WITH SYK</scope>
    <scope>SUBCELLULAR LOCATION</scope>
</reference>
<reference key="10">
    <citation type="journal article" date="2012" name="Proc. Natl. Acad. Sci. U.S.A.">
        <title>N-terminal acetylome analyses and functional insights of the N-terminal acetyltransferase NatB.</title>
        <authorList>
            <person name="Van Damme P."/>
            <person name="Lasa M."/>
            <person name="Polevoda B."/>
            <person name="Gazquez C."/>
            <person name="Elosegui-Artola A."/>
            <person name="Kim D.S."/>
            <person name="De Juan-Pardo E."/>
            <person name="Demeyer K."/>
            <person name="Hole K."/>
            <person name="Larrea E."/>
            <person name="Timmerman E."/>
            <person name="Prieto J."/>
            <person name="Arnesen T."/>
            <person name="Sherman F."/>
            <person name="Gevaert K."/>
            <person name="Aldabe R."/>
        </authorList>
    </citation>
    <scope>IDENTIFICATION BY MASS SPECTROMETRY [LARGE SCALE ANALYSIS]</scope>
</reference>
<reference key="11">
    <citation type="journal article" date="2013" name="J. Proteome Res.">
        <title>Toward a comprehensive characterization of a human cancer cell phosphoproteome.</title>
        <authorList>
            <person name="Zhou H."/>
            <person name="Di Palma S."/>
            <person name="Preisinger C."/>
            <person name="Peng M."/>
            <person name="Polat A.N."/>
            <person name="Heck A.J."/>
            <person name="Mohammed S."/>
        </authorList>
    </citation>
    <scope>PHOSPHORYLATION [LARGE SCALE ANALYSIS] AT SER-120; SER-835 AND SER-1003</scope>
    <scope>IDENTIFICATION BY MASS SPECTROMETRY [LARGE SCALE ANALYSIS]</scope>
    <source>
        <tissue>Cervix carcinoma</tissue>
    </source>
</reference>
<reference key="12">
    <citation type="journal article" date="2013" name="Mol. Cell. Biol.">
        <title>C1-Ten is a protein tyrosine phosphatase of insulin receptor substrate 1 (IRS-1), regulating IRS-1 stability and muscle atrophy.</title>
        <authorList>
            <person name="Koh A."/>
            <person name="Lee M.N."/>
            <person name="Yang Y.R."/>
            <person name="Jeong H."/>
            <person name="Ghim J."/>
            <person name="Noh J."/>
            <person name="Kim J."/>
            <person name="Ryu D."/>
            <person name="Park S."/>
            <person name="Song P."/>
            <person name="Koo S.H."/>
            <person name="Leslie N.R."/>
            <person name="Berggren P.O."/>
            <person name="Choi J.H."/>
            <person name="Suh P.G."/>
            <person name="Ryu S.H."/>
        </authorList>
    </citation>
    <scope>FUNCTION</scope>
    <scope>CATALYTIC ACTIVITY</scope>
    <scope>MUTAGENESIS OF CYS-231</scope>
</reference>
<reference key="13">
    <citation type="journal article" date="2014" name="Cell. Signal.">
        <title>Regulation of C1-Ten protein tyrosine phosphatase by p62/SQSTM1-mediated sequestration and degradation.</title>
        <authorList>
            <person name="Koh A."/>
            <person name="Park D."/>
            <person name="Jeong H."/>
            <person name="Lee J."/>
            <person name="Lee M.N."/>
            <person name="Suh P.G."/>
            <person name="Ryu S.H."/>
        </authorList>
    </citation>
    <scope>INTERACTION WITH SQSTM1</scope>
    <scope>SUBCELLULAR LOCATION</scope>
    <scope>UBIQUITINATION</scope>
    <scope>MUTAGENESIS OF CYS-231</scope>
</reference>
<reference key="14">
    <citation type="journal article" date="2014" name="J. Proteomics">
        <title>An enzyme assisted RP-RPLC approach for in-depth analysis of human liver phosphoproteome.</title>
        <authorList>
            <person name="Bian Y."/>
            <person name="Song C."/>
            <person name="Cheng K."/>
            <person name="Dong M."/>
            <person name="Wang F."/>
            <person name="Huang J."/>
            <person name="Sun D."/>
            <person name="Wang L."/>
            <person name="Ye M."/>
            <person name="Zou H."/>
        </authorList>
    </citation>
    <scope>PHOSPHORYLATION [LARGE SCALE ANALYSIS] AT THR-91; SER-120; SER-455; TYR-456; SER-466; THR-474; SER-820; SER-825; SER-830; SER-832; SER-845; SER-931; SER-941; SER-972; THR-977; SER-991; SER-1003; THR-1182 AND SER-1247</scope>
    <scope>IDENTIFICATION BY MASS SPECTROMETRY [LARGE SCALE ANALYSIS]</scope>
    <source>
        <tissue>Liver</tissue>
    </source>
</reference>
<reference key="15">
    <citation type="journal article" date="2015" name="Biochim. Biophys. Acta">
        <title>Tensin1 positively regulates RhoA activity through its interaction with DLC1.</title>
        <authorList>
            <person name="Shih Y.P."/>
            <person name="Sun P."/>
            <person name="Wang A."/>
            <person name="Lo S.H."/>
        </authorList>
    </citation>
    <scope>FUNCTION</scope>
</reference>
<reference key="16">
    <citation type="journal article" date="2018" name="Biochim. Biophys. Acta">
        <authorList>
            <person name="Shih Y.P."/>
            <person name="Sun P."/>
            <person name="Wang A."/>
            <person name="Lo S.H."/>
        </authorList>
    </citation>
    <scope>ERRATUM OF PUBMED:26427649</scope>
</reference>
<reference key="17">
    <citation type="journal article" date="2017" name="Sci. Rep.">
        <title>C1-Ten is a PTPase of nephrin, regulating podocyte hypertrophy through mTORC1 activation.</title>
        <authorList>
            <person name="Lee J."/>
            <person name="Koh A."/>
            <person name="Jeong H."/>
            <person name="Kim E."/>
            <person name="Ha T.S."/>
            <person name="Saleem M.A."/>
            <person name="Ryu S.H."/>
        </authorList>
    </citation>
    <scope>FUNCTION</scope>
    <scope>CATALYTIC ACTIVITY</scope>
    <scope>INDUCTION</scope>
    <scope>MUTAGENESIS OF CYS-231</scope>
</reference>
<reference key="18">
    <citation type="journal article" date="2018" name="Cell. Signal.">
        <title>Cellular phosphatase activity of C1-Ten/Tensin2 is controlled by Phosphatidylinositol-3,4,5-triphosphate binding through the C1-Ten/Tensin2 SH2 domain.</title>
        <authorList>
            <person name="Kim E."/>
            <person name="Kim D.H."/>
            <person name="Singaram I."/>
            <person name="Jeong H."/>
            <person name="Koh A."/>
            <person name="Lee J."/>
            <person name="Cho W."/>
            <person name="Ryu S.H."/>
        </authorList>
    </citation>
    <scope>FUNCTION</scope>
    <scope>CATALYTIC ACTIVITY</scope>
    <scope>SUBCELLULAR LOCATION</scope>
    <scope>DOMAIN</scope>
    <scope>MUTAGENESIS OF LYS-1142; LYS-1155; LYS-1157; ARG-1165; LYS-1209; LYS-1212 AND LYS-1214</scope>
</reference>
<reference key="19">
    <citation type="submission" date="2006-10" db="PDB data bank">
        <title>Solution structure of the PTB domain of KIAA1075 protein from human.</title>
        <authorList>
            <consortium name="RIKEN structural genomics initiative (RSGI)"/>
        </authorList>
    </citation>
    <scope>STRUCTURE BY NMR OF 1263-1409</scope>
</reference>
<comment type="function">
    <text evidence="1 10 11 13 15 16 17">Tyrosine-protein phosphatase which regulates cell motility, proliferation and muscle-response to insulin (PubMed:15817639, PubMed:23401856). Phosphatase activity is mediated by binding to phosphatidylinositol-3,4,5-triphosphate (PtdIns(3,4,5)P3) via the SH2 domain (PubMed:30092354). In muscles and under catabolic conditions, dephosphorylates IRS1 leading to its degradation and muscle atrophy (PubMed:23401856, PubMed:30092354). Negatively regulates PI3K-AKT pathway activation (PubMed:15817639, PubMed:23401856, PubMed:30092354). Dephosphorylates nephrin NPHS1 in podocytes which regulates activity of the mTORC1 complex (PubMed:28955049). Under normal glucose conditions, NPHS1 outcompetes IRS1 for binding to phosphatidylinositol 3-kinase (PI3K) which balances mTORC1 activity but high glucose conditions lead to up-regulation of TNS2, increased NPHS1 dephosphorylation and activation of mTORC1, contributing to podocyte hypertrophy and proteinuria (PubMed:28955049). Required for correct podocyte morphology, podocyte-glomerular basement membrane interaction and integrity of the glomerular filtration barrier (By similarity). Enhances RHOA activation in the presence of DLC1 (PubMed:26427649). Plays a role in promoting DLC1-dependent remodeling of the extracellular matrix (PubMed:20069572).</text>
</comment>
<comment type="catalytic activity">
    <reaction evidence="13 16 17">
        <text>O-phospho-L-tyrosyl-[protein] + H2O = L-tyrosyl-[protein] + phosphate</text>
        <dbReference type="Rhea" id="RHEA:10684"/>
        <dbReference type="Rhea" id="RHEA-COMP:10136"/>
        <dbReference type="Rhea" id="RHEA-COMP:20101"/>
        <dbReference type="ChEBI" id="CHEBI:15377"/>
        <dbReference type="ChEBI" id="CHEBI:43474"/>
        <dbReference type="ChEBI" id="CHEBI:46858"/>
        <dbReference type="ChEBI" id="CHEBI:61978"/>
        <dbReference type="EC" id="3.1.3.48"/>
    </reaction>
</comment>
<comment type="subunit">
    <text evidence="9 12 14">Interacts with AXL (PubMed:12470648). Interacts with SYK; leading to its phosphorylation (PubMed:22019427). Interacts with SQSTM1 (via PB1 domain); the interaction leads to sequestration of TNS2 in cytoplasmic aggregates with SQSTM1 and promotes TNS2 ubiquitination and proteasomal degradation (PubMed:25101860).</text>
</comment>
<comment type="interaction">
    <interactant intactId="EBI-949753">
        <id>Q63HR2</id>
    </interactant>
    <interactant intactId="EBI-12823597">
        <id>Q9Y4X0-3</id>
        <label>AMMECR1</label>
    </interactant>
    <organismsDiffer>false</organismsDiffer>
    <experiments>3</experiments>
</comment>
<comment type="interaction">
    <interactant intactId="EBI-949753">
        <id>Q63HR2</id>
    </interactant>
    <interactant intactId="EBI-745213">
        <id>P29972</id>
        <label>AQP1</label>
    </interactant>
    <organismsDiffer>false</organismsDiffer>
    <experiments>3</experiments>
</comment>
<comment type="interaction">
    <interactant intactId="EBI-949753">
        <id>Q63HR2</id>
    </interactant>
    <interactant intactId="EBI-948603">
        <id>Q03989</id>
        <label>ARID5A</label>
    </interactant>
    <organismsDiffer>false</organismsDiffer>
    <experiments>3</experiments>
</comment>
<comment type="interaction">
    <interactant intactId="EBI-949753">
        <id>Q63HR2</id>
    </interactant>
    <interactant intactId="EBI-1049505">
        <id>P30049</id>
        <label>ATP5F1D</label>
    </interactant>
    <organismsDiffer>false</organismsDiffer>
    <experiments>3</experiments>
</comment>
<comment type="interaction">
    <interactant intactId="EBI-949753">
        <id>Q63HR2</id>
    </interactant>
    <interactant intactId="EBI-742750">
        <id>Q8TBE0</id>
        <label>BAHD1</label>
    </interactant>
    <organismsDiffer>false</organismsDiffer>
    <experiments>3</experiments>
</comment>
<comment type="interaction">
    <interactant intactId="EBI-949753">
        <id>Q63HR2</id>
    </interactant>
    <interactant intactId="EBI-2548012">
        <id>Q9H2G9</id>
        <label>BLZF1</label>
    </interactant>
    <organismsDiffer>false</organismsDiffer>
    <experiments>3</experiments>
</comment>
<comment type="interaction">
    <interactant intactId="EBI-949753">
        <id>Q63HR2</id>
    </interactant>
    <interactant intactId="EBI-11532900">
        <id>J3KQ12</id>
        <label>BSCL2</label>
    </interactant>
    <organismsDiffer>false</organismsDiffer>
    <experiments>3</experiments>
</comment>
<comment type="interaction">
    <interactant intactId="EBI-949753">
        <id>Q63HR2</id>
    </interactant>
    <interactant intactId="EBI-6660291">
        <id>Q6NUJ2</id>
        <label>C11orf87</label>
    </interactant>
    <organismsDiffer>false</organismsDiffer>
    <experiments>3</experiments>
</comment>
<comment type="interaction">
    <interactant intactId="EBI-949753">
        <id>Q63HR2</id>
    </interactant>
    <interactant intactId="EBI-946029">
        <id>Q6P1W5</id>
        <label>C1orf94</label>
    </interactant>
    <organismsDiffer>false</organismsDiffer>
    <experiments>3</experiments>
</comment>
<comment type="interaction">
    <interactant intactId="EBI-949753">
        <id>Q63HR2</id>
    </interactant>
    <interactant intactId="EBI-7317823">
        <id>Q6P5X5</id>
        <label>C22orf39</label>
    </interactant>
    <organismsDiffer>false</organismsDiffer>
    <experiments>3</experiments>
</comment>
<comment type="interaction">
    <interactant intactId="EBI-949753">
        <id>Q63HR2</id>
    </interactant>
    <interactant intactId="EBI-744545">
        <id>Q8NEC5</id>
        <label>CATSPER1</label>
    </interactant>
    <organismsDiffer>false</organismsDiffer>
    <experiments>3</experiments>
</comment>
<comment type="interaction">
    <interactant intactId="EBI-949753">
        <id>Q63HR2</id>
    </interactant>
    <interactant intactId="EBI-741032">
        <id>Q8NE01</id>
        <label>CNNM3</label>
    </interactant>
    <organismsDiffer>false</organismsDiffer>
    <experiments>3</experiments>
</comment>
<comment type="interaction">
    <interactant intactId="EBI-949753">
        <id>Q63HR2</id>
    </interactant>
    <interactant intactId="EBI-11523759">
        <id>Q8N684-3</id>
        <label>CPSF7</label>
    </interactant>
    <organismsDiffer>false</organismsDiffer>
    <experiments>3</experiments>
</comment>
<comment type="interaction">
    <interactant intactId="EBI-949753">
        <id>Q63HR2</id>
    </interactant>
    <interactant intactId="EBI-748171">
        <id>O43186</id>
        <label>CRX</label>
    </interactant>
    <organismsDiffer>false</organismsDiffer>
    <experiments>3</experiments>
</comment>
<comment type="interaction">
    <interactant intactId="EBI-949753">
        <id>Q63HR2</id>
    </interactant>
    <interactant intactId="EBI-8636823">
        <id>Q9UBR2</id>
        <label>CTSZ</label>
    </interactant>
    <organismsDiffer>false</organismsDiffer>
    <experiments>3</experiments>
</comment>
<comment type="interaction">
    <interactant intactId="EBI-949753">
        <id>Q63HR2</id>
    </interactant>
    <interactant intactId="EBI-998108">
        <id>Q86YF9</id>
        <label>DZIP1</label>
    </interactant>
    <organismsDiffer>false</organismsDiffer>
    <experiments>3</experiments>
</comment>
<comment type="interaction">
    <interactant intactId="EBI-949753">
        <id>Q63HR2</id>
    </interactant>
    <interactant intactId="EBI-948630">
        <id>Q86Y13</id>
        <label>DZIP3</label>
    </interactant>
    <organismsDiffer>false</organismsDiffer>
    <experiments>3</experiments>
</comment>
<comment type="interaction">
    <interactant intactId="EBI-949753">
        <id>Q63HR2</id>
    </interactant>
    <interactant intactId="EBI-744099">
        <id>Q9H0I2</id>
        <label>ENKD1</label>
    </interactant>
    <organismsDiffer>false</organismsDiffer>
    <experiments>3</experiments>
</comment>
<comment type="interaction">
    <interactant intactId="EBI-949753">
        <id>Q63HR2</id>
    </interactant>
    <interactant intactId="EBI-946972">
        <id>Q9UM22</id>
        <label>EPDR1</label>
    </interactant>
    <organismsDiffer>false</organismsDiffer>
    <experiments>3</experiments>
</comment>
<comment type="interaction">
    <interactant intactId="EBI-949753">
        <id>Q63HR2</id>
    </interactant>
    <interactant intactId="EBI-641062">
        <id>P04626</id>
        <label>ERBB2</label>
    </interactant>
    <organismsDiffer>false</organismsDiffer>
    <experiments>4</experiments>
</comment>
<comment type="interaction">
    <interactant intactId="EBI-949753">
        <id>Q63HR2</id>
    </interactant>
    <interactant intactId="EBI-720706">
        <id>P21860</id>
        <label>ERBB3</label>
    </interactant>
    <organismsDiffer>false</organismsDiffer>
    <experiments>3</experiments>
</comment>
<comment type="interaction">
    <interactant intactId="EBI-949753">
        <id>Q63HR2</id>
    </interactant>
    <interactant intactId="EBI-3943864">
        <id>Q8N9I5</id>
        <label>FADS6</label>
    </interactant>
    <organismsDiffer>false</organismsDiffer>
    <experiments>3</experiments>
</comment>
<comment type="interaction">
    <interactant intactId="EBI-949753">
        <id>Q63HR2</id>
    </interactant>
    <interactant intactId="EBI-12958227">
        <id>Q86W67</id>
        <label>FAM228A</label>
    </interactant>
    <organismsDiffer>false</organismsDiffer>
    <experiments>3</experiments>
</comment>
<comment type="interaction">
    <interactant intactId="EBI-949753">
        <id>Q63HR2</id>
    </interactant>
    <interactant intactId="EBI-495538">
        <id>P48023</id>
        <label>FASLG</label>
    </interactant>
    <organismsDiffer>false</organismsDiffer>
    <experiments>3</experiments>
</comment>
<comment type="interaction">
    <interactant intactId="EBI-949753">
        <id>Q63HR2</id>
    </interactant>
    <interactant intactId="EBI-740785">
        <id>P49639</id>
        <label>HOXA1</label>
    </interactant>
    <organismsDiffer>false</organismsDiffer>
    <experiments>3</experiments>
</comment>
<comment type="interaction">
    <interactant intactId="EBI-949753">
        <id>Q63HR2</id>
    </interactant>
    <interactant intactId="EBI-745290">
        <id>P17482</id>
        <label>HOXB9</label>
    </interactant>
    <organismsDiffer>false</organismsDiffer>
    <experiments>3</experiments>
</comment>
<comment type="interaction">
    <interactant intactId="EBI-949753">
        <id>Q63HR2</id>
    </interactant>
    <interactant intactId="EBI-1752118">
        <id>P31273</id>
        <label>HOXC8</label>
    </interactant>
    <organismsDiffer>false</organismsDiffer>
    <experiments>3</experiments>
</comment>
<comment type="interaction">
    <interactant intactId="EBI-949753">
        <id>Q63HR2</id>
    </interactant>
    <interactant intactId="EBI-715611">
        <id>Q9C086</id>
        <label>INO80B</label>
    </interactant>
    <organismsDiffer>false</organismsDiffer>
    <experiments>3</experiments>
</comment>
<comment type="interaction">
    <interactant intactId="EBI-949753">
        <id>Q63HR2</id>
    </interactant>
    <interactant intactId="EBI-4397613">
        <id>Q7L273</id>
        <label>KCTD9</label>
    </interactant>
    <organismsDiffer>false</organismsDiffer>
    <experiments>3</experiments>
</comment>
<comment type="interaction">
    <interactant intactId="EBI-949753">
        <id>Q63HR2</id>
    </interactant>
    <interactant intactId="EBI-1379503">
        <id>P10721</id>
        <label>KIT</label>
    </interactant>
    <organismsDiffer>false</organismsDiffer>
    <experiments>2</experiments>
</comment>
<comment type="interaction">
    <interactant intactId="EBI-949753">
        <id>Q63HR2</id>
    </interactant>
    <interactant intactId="EBI-10981970">
        <id>Q5T749</id>
        <label>KPRP</label>
    </interactant>
    <organismsDiffer>false</organismsDiffer>
    <experiments>5</experiments>
</comment>
<comment type="interaction">
    <interactant intactId="EBI-949753">
        <id>Q63HR2</id>
    </interactant>
    <interactant intactId="EBI-2952745">
        <id>Q01546</id>
        <label>KRT76</label>
    </interactant>
    <organismsDiffer>false</organismsDiffer>
    <experiments>3</experiments>
</comment>
<comment type="interaction">
    <interactant intactId="EBI-949753">
        <id>Q63HR2</id>
    </interactant>
    <interactant intactId="EBI-11749135">
        <id>Q8IUG1</id>
        <label>KRTAP1-3</label>
    </interactant>
    <organismsDiffer>false</organismsDiffer>
    <experiments>5</experiments>
</comment>
<comment type="interaction">
    <interactant intactId="EBI-949753">
        <id>Q63HR2</id>
    </interactant>
    <interactant intactId="EBI-10172150">
        <id>P60370</id>
        <label>KRTAP10-5</label>
    </interactant>
    <organismsDiffer>false</organismsDiffer>
    <experiments>3</experiments>
</comment>
<comment type="interaction">
    <interactant intactId="EBI-949753">
        <id>Q63HR2</id>
    </interactant>
    <interactant intactId="EBI-10172290">
        <id>P60409</id>
        <label>KRTAP10-7</label>
    </interactant>
    <organismsDiffer>false</organismsDiffer>
    <experiments>3</experiments>
</comment>
<comment type="interaction">
    <interactant intactId="EBI-949753">
        <id>Q63HR2</id>
    </interactant>
    <interactant intactId="EBI-10171774">
        <id>P60410</id>
        <label>KRTAP10-8</label>
    </interactant>
    <organismsDiffer>false</organismsDiffer>
    <experiments>3</experiments>
</comment>
<comment type="interaction">
    <interactant intactId="EBI-949753">
        <id>Q63HR2</id>
    </interactant>
    <interactant intactId="EBI-1052037">
        <id>Q8IUC1</id>
        <label>KRTAP11-1</label>
    </interactant>
    <organismsDiffer>false</organismsDiffer>
    <experiments>5</experiments>
</comment>
<comment type="interaction">
    <interactant intactId="EBI-949753">
        <id>Q63HR2</id>
    </interactant>
    <interactant intactId="EBI-10176379">
        <id>P59991</id>
        <label>KRTAP12-2</label>
    </interactant>
    <organismsDiffer>false</organismsDiffer>
    <experiments>6</experiments>
</comment>
<comment type="interaction">
    <interactant intactId="EBI-949753">
        <id>Q63HR2</id>
    </interactant>
    <interactant intactId="EBI-11953334">
        <id>P60328</id>
        <label>KRTAP12-3</label>
    </interactant>
    <organismsDiffer>false</organismsDiffer>
    <experiments>3</experiments>
</comment>
<comment type="interaction">
    <interactant intactId="EBI-949753">
        <id>Q63HR2</id>
    </interactant>
    <interactant intactId="EBI-11953846">
        <id>Q52LG2</id>
        <label>KRTAP13-2</label>
    </interactant>
    <organismsDiffer>false</organismsDiffer>
    <experiments>3</experiments>
</comment>
<comment type="interaction">
    <interactant intactId="EBI-949753">
        <id>Q63HR2</id>
    </interactant>
    <interactant intactId="EBI-11958132">
        <id>Q9BYR3</id>
        <label>KRTAP4-4</label>
    </interactant>
    <organismsDiffer>false</organismsDiffer>
    <experiments>3</experiments>
</comment>
<comment type="interaction">
    <interactant intactId="EBI-949753">
        <id>Q63HR2</id>
    </interactant>
    <interactant intactId="EBI-22311199">
        <id>Q3LI67</id>
        <label>KRTAP6-3</label>
    </interactant>
    <organismsDiffer>false</organismsDiffer>
    <experiments>3</experiments>
</comment>
<comment type="interaction">
    <interactant intactId="EBI-949753">
        <id>Q63HR2</id>
    </interactant>
    <interactant intactId="EBI-9088686">
        <id>Q14847-2</id>
        <label>LASP1</label>
    </interactant>
    <organismsDiffer>false</organismsDiffer>
    <experiments>3</experiments>
</comment>
<comment type="interaction">
    <interactant intactId="EBI-949753">
        <id>Q63HR2</id>
    </interactant>
    <interactant intactId="EBI-12028858">
        <id>Q8IXW0</id>
        <label>LMNTD2</label>
    </interactant>
    <organismsDiffer>false</organismsDiffer>
    <experiments>3</experiments>
</comment>
<comment type="interaction">
    <interactant intactId="EBI-949753">
        <id>Q63HR2</id>
    </interactant>
    <interactant intactId="EBI-744222">
        <id>O60711</id>
        <label>LPXN</label>
    </interactant>
    <organismsDiffer>false</organismsDiffer>
    <experiments>3</experiments>
</comment>
<comment type="interaction">
    <interactant intactId="EBI-949753">
        <id>Q63HR2</id>
    </interactant>
    <interactant intactId="EBI-10198848">
        <id>Q9P127</id>
        <label>LUZP4</label>
    </interactant>
    <organismsDiffer>false</organismsDiffer>
    <experiments>3</experiments>
</comment>
<comment type="interaction">
    <interactant intactId="EBI-949753">
        <id>Q63HR2</id>
    </interactant>
    <interactant intactId="EBI-1039152">
        <id>P08581</id>
        <label>MET</label>
    </interactant>
    <organismsDiffer>false</organismsDiffer>
    <experiments>2</experiments>
</comment>
<comment type="interaction">
    <interactant intactId="EBI-949753">
        <id>Q63HR2</id>
    </interactant>
    <interactant intactId="EBI-2858213">
        <id>Q86VE0</id>
        <label>MYPOP</label>
    </interactant>
    <organismsDiffer>false</organismsDiffer>
    <experiments>3</experiments>
</comment>
<comment type="interaction">
    <interactant intactId="EBI-949753">
        <id>Q63HR2</id>
    </interactant>
    <interactant intactId="EBI-22310682">
        <id>P0DPK4</id>
        <label>NOTCH2NLC</label>
    </interactant>
    <organismsDiffer>false</organismsDiffer>
    <experiments>3</experiments>
</comment>
<comment type="interaction">
    <interactant intactId="EBI-949753">
        <id>Q63HR2</id>
    </interactant>
    <interactant intactId="EBI-1048886">
        <id>Q9Y5Y2</id>
        <label>NUBP2</label>
    </interactant>
    <organismsDiffer>false</organismsDiffer>
    <experiments>3</experiments>
</comment>
<comment type="interaction">
    <interactant intactId="EBI-949753">
        <id>Q63HR2</id>
    </interactant>
    <interactant intactId="EBI-740446">
        <id>P32242</id>
        <label>OTX1</label>
    </interactant>
    <organismsDiffer>false</organismsDiffer>
    <experiments>5</experiments>
</comment>
<comment type="interaction">
    <interactant intactId="EBI-949753">
        <id>Q63HR2</id>
    </interactant>
    <interactant intactId="EBI-11022007">
        <id>Q9HBE1-4</id>
        <label>PATZ1</label>
    </interactant>
    <organismsDiffer>false</organismsDiffer>
    <experiments>3</experiments>
</comment>
<comment type="interaction">
    <interactant intactId="EBI-949753">
        <id>Q63HR2</id>
    </interactant>
    <interactant intactId="EBI-530034">
        <id>O43189</id>
        <label>PHF1</label>
    </interactant>
    <organismsDiffer>false</organismsDiffer>
    <experiments>3</experiments>
</comment>
<comment type="interaction">
    <interactant intactId="EBI-949753">
        <id>Q63HR2</id>
    </interactant>
    <interactant intactId="EBI-714158">
        <id>Q13526</id>
        <label>PIN1</label>
    </interactant>
    <organismsDiffer>false</organismsDiffer>
    <experiments>3</experiments>
</comment>
<comment type="interaction">
    <interactant intactId="EBI-949753">
        <id>Q63HR2</id>
    </interactant>
    <interactant intactId="EBI-2513407">
        <id>Q13835</id>
        <label>PKP1</label>
    </interactant>
    <organismsDiffer>false</organismsDiffer>
    <experiments>3</experiments>
</comment>
<comment type="interaction">
    <interactant intactId="EBI-949753">
        <id>Q63HR2</id>
    </interactant>
    <interactant intactId="EBI-750734">
        <id>Q9NRY6</id>
        <label>PLSCR3</label>
    </interactant>
    <organismsDiffer>false</organismsDiffer>
    <experiments>3</experiments>
</comment>
<comment type="interaction">
    <interactant intactId="EBI-949753">
        <id>Q63HR2</id>
    </interactant>
    <interactant intactId="EBI-744023">
        <id>Q9BTL3</id>
        <label>RAMAC</label>
    </interactant>
    <organismsDiffer>false</organismsDiffer>
    <experiments>3</experiments>
</comment>
<comment type="interaction">
    <interactant intactId="EBI-949753">
        <id>Q63HR2</id>
    </interactant>
    <interactant intactId="EBI-1210429">
        <id>Q9NYW8</id>
        <label>RBAK</label>
    </interactant>
    <organismsDiffer>false</organismsDiffer>
    <experiments>3</experiments>
</comment>
<comment type="interaction">
    <interactant intactId="EBI-949753">
        <id>Q63HR2</id>
    </interactant>
    <interactant intactId="EBI-750345">
        <id>Q96HR9</id>
        <label>REEP6</label>
    </interactant>
    <organismsDiffer>false</organismsDiffer>
    <experiments>3</experiments>
</comment>
<comment type="interaction">
    <interactant intactId="EBI-949753">
        <id>Q63HR2</id>
    </interactant>
    <interactant intactId="EBI-307352">
        <id>Q04864</id>
        <label>REL</label>
    </interactant>
    <organismsDiffer>false</organismsDiffer>
    <experiments>3</experiments>
</comment>
<comment type="interaction">
    <interactant intactId="EBI-949753">
        <id>Q63HR2</id>
    </interactant>
    <interactant intactId="EBI-16428950">
        <id>A0A0S2Z4G9</id>
        <label>RNF6</label>
    </interactant>
    <organismsDiffer>false</organismsDiffer>
    <experiments>3</experiments>
</comment>
<comment type="interaction">
    <interactant intactId="EBI-949753">
        <id>Q63HR2</id>
    </interactant>
    <interactant intactId="EBI-2822051">
        <id>Q14140</id>
        <label>SERTAD2</label>
    </interactant>
    <organismsDiffer>false</organismsDiffer>
    <experiments>3</experiments>
</comment>
<comment type="interaction">
    <interactant intactId="EBI-949753">
        <id>Q63HR2</id>
    </interactant>
    <interactant intactId="EBI-10313866">
        <id>Q9NUL5</id>
        <label>SHFL</label>
    </interactant>
    <organismsDiffer>false</organismsDiffer>
    <experiments>4</experiments>
</comment>
<comment type="interaction">
    <interactant intactId="EBI-949753">
        <id>Q63HR2</id>
    </interactant>
    <interactant intactId="EBI-12065614">
        <id>Q6ZT89-3</id>
        <label>SLC25A48</label>
    </interactant>
    <organismsDiffer>false</organismsDiffer>
    <experiments>3</experiments>
</comment>
<comment type="interaction">
    <interactant intactId="EBI-949753">
        <id>Q63HR2</id>
    </interactant>
    <interactant intactId="EBI-1539606">
        <id>O14512</id>
        <label>SOCS7</label>
    </interactant>
    <organismsDiffer>false</organismsDiffer>
    <experiments>3</experiments>
</comment>
<comment type="interaction">
    <interactant intactId="EBI-949753">
        <id>Q63HR2</id>
    </interactant>
    <interactant intactId="EBI-741237">
        <id>O60504</id>
        <label>SORBS3</label>
    </interactant>
    <organismsDiffer>false</organismsDiffer>
    <experiments>3</experiments>
</comment>
<comment type="interaction">
    <interactant intactId="EBI-949753">
        <id>Q63HR2</id>
    </interactant>
    <interactant intactId="EBI-1054721">
        <id>Q9UGT4</id>
        <label>SUSD2</label>
    </interactant>
    <organismsDiffer>false</organismsDiffer>
    <experiments>3</experiments>
</comment>
<comment type="interaction">
    <interactant intactId="EBI-949753">
        <id>Q63HR2</id>
    </interactant>
    <interactant intactId="EBI-10246152">
        <id>Q5T7P8-2</id>
        <label>SYT6</label>
    </interactant>
    <organismsDiffer>false</organismsDiffer>
    <experiments>3</experiments>
</comment>
<comment type="interaction">
    <interactant intactId="EBI-949753">
        <id>Q63HR2</id>
    </interactant>
    <interactant intactId="EBI-8644516">
        <id>Q9BXF9</id>
        <label>TEKT3</label>
    </interactant>
    <organismsDiffer>false</organismsDiffer>
    <experiments>3</experiments>
</comment>
<comment type="interaction">
    <interactant intactId="EBI-949753">
        <id>Q63HR2</id>
    </interactant>
    <interactant intactId="EBI-10239812">
        <id>Q96M29</id>
        <label>TEKT5</label>
    </interactant>
    <organismsDiffer>false</organismsDiffer>
    <experiments>6</experiments>
</comment>
<comment type="interaction">
    <interactant intactId="EBI-949753">
        <id>Q63HR2</id>
    </interactant>
    <interactant intactId="EBI-752030">
        <id>Q96A09</id>
        <label>TENT5B</label>
    </interactant>
    <organismsDiffer>false</organismsDiffer>
    <experiments>3</experiments>
</comment>
<comment type="interaction">
    <interactant intactId="EBI-949753">
        <id>Q63HR2</id>
    </interactant>
    <interactant intactId="EBI-11952651">
        <id>Q7Z6R9</id>
        <label>TFAP2D</label>
    </interactant>
    <organismsDiffer>false</organismsDiffer>
    <experiments>3</experiments>
</comment>
<comment type="interaction">
    <interactant intactId="EBI-949753">
        <id>Q63HR2</id>
    </interactant>
    <interactant intactId="EBI-949753">
        <id>Q63HR2</id>
        <label>TNS2</label>
    </interactant>
    <organismsDiffer>false</organismsDiffer>
    <experiments>3</experiments>
</comment>
<comment type="interaction">
    <interactant intactId="EBI-949753">
        <id>Q63HR2</id>
    </interactant>
    <interactant intactId="EBI-2340370">
        <id>Q9BZR9</id>
        <label>TRIM8</label>
    </interactant>
    <organismsDiffer>false</organismsDiffer>
    <experiments>3</experiments>
</comment>
<comment type="interaction">
    <interactant intactId="EBI-949753">
        <id>Q63HR2</id>
    </interactant>
    <interactant intactId="EBI-11975223">
        <id>Q70EL1-9</id>
        <label>USP54</label>
    </interactant>
    <organismsDiffer>false</organismsDiffer>
    <experiments>3</experiments>
</comment>
<comment type="interaction">
    <interactant intactId="EBI-949753">
        <id>Q63HR2</id>
    </interactant>
    <interactant intactId="EBI-3937908">
        <id>Q8WYQ9</id>
        <label>ZCCHC14</label>
    </interactant>
    <organismsDiffer>false</organismsDiffer>
    <experiments>3</experiments>
</comment>
<comment type="interaction">
    <interactant intactId="EBI-949753">
        <id>Q63HR2</id>
    </interactant>
    <interactant intactId="EBI-11962760">
        <id>Q9NZV7</id>
        <label>ZIM2</label>
    </interactant>
    <organismsDiffer>false</organismsDiffer>
    <experiments>3</experiments>
</comment>
<comment type="interaction">
    <interactant intactId="EBI-949753">
        <id>Q63HR2</id>
    </interactant>
    <interactant intactId="EBI-18054945">
        <id>P52741</id>
        <label>ZNF134</label>
    </interactant>
    <organismsDiffer>false</organismsDiffer>
    <experiments>3</experiments>
</comment>
<comment type="interaction">
    <interactant intactId="EBI-949753">
        <id>Q63HR2</id>
    </interactant>
    <interactant intactId="EBI-747343">
        <id>O95201</id>
        <label>ZNF205</label>
    </interactant>
    <organismsDiffer>false</organismsDiffer>
    <experiments>3</experiments>
</comment>
<comment type="interaction">
    <interactant intactId="EBI-949753">
        <id>Q63HR2</id>
    </interactant>
    <interactant intactId="EBI-10177272">
        <id>P15622-3</id>
        <label>ZNF250</label>
    </interactant>
    <organismsDiffer>false</organismsDiffer>
    <experiments>3</experiments>
</comment>
<comment type="interaction">
    <interactant intactId="EBI-949753">
        <id>Q63HR2</id>
    </interactant>
    <interactant intactId="EBI-740727">
        <id>Q8TAU3</id>
        <label>ZNF417</label>
    </interactant>
    <organismsDiffer>false</organismsDiffer>
    <experiments>9</experiments>
</comment>
<comment type="interaction">
    <interactant intactId="EBI-949753">
        <id>Q63HR2</id>
    </interactant>
    <interactant intactId="EBI-10486136">
        <id>Q6ZNH5</id>
        <label>ZNF497</label>
    </interactant>
    <organismsDiffer>false</organismsDiffer>
    <experiments>3</experiments>
</comment>
<comment type="interaction">
    <interactant intactId="EBI-949753">
        <id>Q63HR2</id>
    </interactant>
    <interactant intactId="EBI-14069183">
        <id>Q86XF7</id>
        <label>ZNF575</label>
    </interactant>
    <organismsDiffer>false</organismsDiffer>
    <experiments>3</experiments>
</comment>
<comment type="interaction">
    <interactant intactId="EBI-949753">
        <id>Q63HR2</id>
    </interactant>
    <interactant intactId="EBI-6427977">
        <id>Q96SQ5</id>
        <label>ZNF587</label>
    </interactant>
    <organismsDiffer>false</organismsDiffer>
    <experiments>6</experiments>
</comment>
<comment type="interaction">
    <interactant intactId="EBI-949753">
        <id>Q63HR2</id>
    </interactant>
    <interactant intactId="EBI-11985915">
        <id>Q5T619</id>
        <label>ZNF648</label>
    </interactant>
    <organismsDiffer>false</organismsDiffer>
    <experiments>3</experiments>
</comment>
<comment type="interaction">
    <interactant intactId="EBI-949753">
        <id>Q63HR2</id>
    </interactant>
    <interactant intactId="EBI-16429014">
        <id>A0A0S2Z5X4</id>
        <label>ZNF688</label>
    </interactant>
    <organismsDiffer>false</organismsDiffer>
    <experiments>3</experiments>
</comment>
<comment type="interaction">
    <interactant intactId="EBI-949753">
        <id>Q63HR2</id>
    </interactant>
    <interactant intactId="EBI-11962574">
        <id>Q96EG3</id>
        <label>ZNF837</label>
    </interactant>
    <organismsDiffer>false</organismsDiffer>
    <experiments>3</experiments>
</comment>
<comment type="interaction">
    <interactant intactId="EBI-949753">
        <id>Q63HR2</id>
    </interactant>
    <interactant intactId="EBI-10315054">
        <id>Q9NWL9</id>
    </interactant>
    <organismsDiffer>false</organismsDiffer>
    <experiments>3</experiments>
</comment>
<comment type="subcellular location">
    <subcellularLocation>
        <location evidence="8 11 12">Cell junction</location>
        <location evidence="8 11 12">Focal adhesion</location>
    </subcellularLocation>
    <subcellularLocation>
        <location evidence="8 17">Cell membrane</location>
        <topology evidence="8">Peripheral membrane protein</topology>
        <orientation evidence="8">Cytoplasmic side</orientation>
    </subcellularLocation>
    <subcellularLocation>
        <location evidence="12 14">Cytoplasm</location>
    </subcellularLocation>
    <text evidence="11 12 14">Detected at the end of actin stress fibers. Detected in cytoplasmic punctate bodies (PubMed:22019427, PubMed:25101860). Localizes to both focal adhesions and fibrillar adhesions but is found mainly in focal adhesions (PubMed:20069572). Enriched in dynamic focal adhesions at the leading edge of the cell and is found only rarely in fibrillar adhesions on the ventral surface of cells (PubMed:20069572).</text>
</comment>
<comment type="alternative products">
    <event type="alternative splicing"/>
    <isoform>
        <id>Q63HR2-1</id>
        <name>1</name>
        <sequence type="displayed"/>
    </isoform>
    <isoform>
        <id>Q63HR2-2</id>
        <name>2</name>
        <sequence type="described" ref="VSP_026460"/>
    </isoform>
    <isoform>
        <id>Q63HR2-4</id>
        <name>4</name>
        <sequence type="described" ref="VSP_026458"/>
    </isoform>
    <isoform>
        <id>Q63HR2-5</id>
        <name>5</name>
        <sequence type="described" ref="VSP_026457"/>
    </isoform>
    <isoform>
        <id>Q63HR2-6</id>
        <name>6</name>
        <sequence type="described" ref="VSP_026461"/>
    </isoform>
</comment>
<comment type="tissue specificity">
    <text evidence="8 9">Detected in heart, kidney, brain, thymus, spleen, liver, placenta, lung, skeletal muscle and small intestine.</text>
</comment>
<comment type="induction">
    <text evidence="16">By high glucose levels in differentiated podocytes (at protein level).</text>
</comment>
<comment type="domain">
    <text evidence="1 17">The SH3 domain mediates binding to phosphatidylinositol-3,4,5-triphosphate (PtdIns(3,4,5)P3) (PubMed:30092354). It is also required to ensure podocyte integrity while the phosphatase domain is dispensible for podocyte maintenance (By similarity).</text>
</comment>
<comment type="PTM">
    <text evidence="14">Ubiquitinated following sequestration in cytoplasmic aggregates with SQSTM1, leading to proteasomal degradation.</text>
</comment>
<comment type="similarity">
    <text evidence="22">Belongs to the PTEN phosphatase protein family.</text>
</comment>
<comment type="sequence caution" evidence="22">
    <conflict type="erroneous initiation">
        <sequence resource="EMBL-CDS" id="AAI29829"/>
    </conflict>
    <text>Truncated N-terminus.</text>
</comment>
<comment type="sequence caution" evidence="22">
    <conflict type="erroneous initiation">
        <sequence resource="EMBL-CDS" id="AAI29830"/>
    </conflict>
    <text>Truncated N-terminus.</text>
</comment>
<comment type="sequence caution" evidence="22">
    <conflict type="erroneous initiation">
        <sequence resource="EMBL-CDS" id="AAI31504"/>
    </conflict>
    <text>Extended N-terminus.</text>
</comment>
<comment type="sequence caution" evidence="22">
    <conflict type="erroneous initiation">
        <sequence resource="EMBL-CDS" id="BAA83027"/>
    </conflict>
    <text>Truncated N-terminus.</text>
</comment>
<comment type="sequence caution" evidence="22">
    <conflict type="miscellaneous discrepancy">
        <sequence resource="EMBL-CDS" id="CAH56176"/>
    </conflict>
    <text>Intron retention.</text>
</comment>
<protein>
    <recommendedName>
        <fullName>Tensin-2</fullName>
        <ecNumber evidence="13 16 17">3.1.3.48</ecNumber>
    </recommendedName>
    <alternativeName>
        <fullName>C1 domain-containing phosphatase and tensin homolog</fullName>
        <shortName>C1-TEN</shortName>
    </alternativeName>
    <alternativeName>
        <fullName>Tensin-like C1 domain-containing phosphatase</fullName>
    </alternativeName>
</protein>
<keyword id="KW-0002">3D-structure</keyword>
<keyword id="KW-0025">Alternative splicing</keyword>
<keyword id="KW-0965">Cell junction</keyword>
<keyword id="KW-1003">Cell membrane</keyword>
<keyword id="KW-0963">Cytoplasm</keyword>
<keyword id="KW-0378">Hydrolase</keyword>
<keyword id="KW-0446">Lipid-binding</keyword>
<keyword id="KW-0472">Membrane</keyword>
<keyword id="KW-0479">Metal-binding</keyword>
<keyword id="KW-0488">Methylation</keyword>
<keyword id="KW-0597">Phosphoprotein</keyword>
<keyword id="KW-0904">Protein phosphatase</keyword>
<keyword id="KW-1267">Proteomics identification</keyword>
<keyword id="KW-1185">Reference proteome</keyword>
<keyword id="KW-0727">SH2 domain</keyword>
<keyword id="KW-0832">Ubl conjugation</keyword>
<keyword id="KW-0862">Zinc</keyword>
<keyword id="KW-0863">Zinc-finger</keyword>
<organism>
    <name type="scientific">Homo sapiens</name>
    <name type="common">Human</name>
    <dbReference type="NCBI Taxonomy" id="9606"/>
    <lineage>
        <taxon>Eukaryota</taxon>
        <taxon>Metazoa</taxon>
        <taxon>Chordata</taxon>
        <taxon>Craniata</taxon>
        <taxon>Vertebrata</taxon>
        <taxon>Euteleostomi</taxon>
        <taxon>Mammalia</taxon>
        <taxon>Eutheria</taxon>
        <taxon>Euarchontoglires</taxon>
        <taxon>Primates</taxon>
        <taxon>Haplorrhini</taxon>
        <taxon>Catarrhini</taxon>
        <taxon>Hominidae</taxon>
        <taxon>Homo</taxon>
    </lineage>
</organism>